<gene>
    <name type="primary">PPP3R1</name>
    <name type="synonym">CNA2</name>
    <name type="synonym">CNB</name>
</gene>
<proteinExistence type="evidence at protein level"/>
<sequence>MGNEASYPLEMCSHFDADEIKRLGKRFKKLDLDNSGSLSVEEFMSLPELQQNPLVQRVIDIFDTDGNGEVDFKEFIEGVSQFSVKGDKEQKLRFAFRIYDMDKDGYISNGELFQVLKMMVGNNLKDTQLQQIVDKTIINADKDGDGRISFEEFCAVVGGLDIHKKMVVDV</sequence>
<feature type="initiator methionine" description="Removed" evidence="9">
    <location>
        <position position="1"/>
    </location>
</feature>
<feature type="chain" id="PRO_0000073484" description="Calcineurin subunit B type 1">
    <location>
        <begin position="2"/>
        <end position="170"/>
    </location>
</feature>
<feature type="domain" description="EF-hand 1" evidence="2">
    <location>
        <begin position="18"/>
        <end position="46"/>
    </location>
</feature>
<feature type="domain" description="EF-hand 2" evidence="2">
    <location>
        <begin position="50"/>
        <end position="85"/>
    </location>
</feature>
<feature type="domain" description="EF-hand 3" evidence="2">
    <location>
        <begin position="87"/>
        <end position="122"/>
    </location>
</feature>
<feature type="domain" description="EF-hand 4" evidence="2">
    <location>
        <begin position="128"/>
        <end position="163"/>
    </location>
</feature>
<feature type="region of interest" description="Calcineurin A binding" evidence="3 4 6 7 8 10 11 14">
    <location>
        <begin position="131"/>
        <end position="136"/>
    </location>
</feature>
<feature type="binding site" evidence="2 3 4 6 7 8 10 11 14 17 18 19 20 21 22 23 24 25 26">
    <location>
        <position position="31"/>
    </location>
    <ligand>
        <name>Ca(2+)</name>
        <dbReference type="ChEBI" id="CHEBI:29108"/>
        <label>1</label>
    </ligand>
</feature>
<feature type="binding site" evidence="2 3 4 6 7 8 10 11 14 17 18 19 20 21 22 23 24 25 26">
    <location>
        <position position="33"/>
    </location>
    <ligand>
        <name>Ca(2+)</name>
        <dbReference type="ChEBI" id="CHEBI:29108"/>
        <label>1</label>
    </ligand>
</feature>
<feature type="binding site" evidence="2 3 4 6 7 8 10 11 14 17 18 19 20 21 22 23 24 25 26">
    <location>
        <position position="35"/>
    </location>
    <ligand>
        <name>Ca(2+)</name>
        <dbReference type="ChEBI" id="CHEBI:29108"/>
        <label>1</label>
    </ligand>
</feature>
<feature type="binding site" evidence="2 3 4 6 7 8 10 11 14 17 18 19 20 21 22 23 24 25 26">
    <location>
        <position position="37"/>
    </location>
    <ligand>
        <name>Ca(2+)</name>
        <dbReference type="ChEBI" id="CHEBI:29108"/>
        <label>1</label>
    </ligand>
</feature>
<feature type="binding site" evidence="2 3 4 6 7 8 10 11 14 17 18 19 20 21 22 23 24 25 26">
    <location>
        <position position="42"/>
    </location>
    <ligand>
        <name>Ca(2+)</name>
        <dbReference type="ChEBI" id="CHEBI:29108"/>
        <label>1</label>
    </ligand>
</feature>
<feature type="binding site" evidence="2 3 4 6 7 8 10 11 14 17 18 19 20 21 22 23 24 25 26">
    <location>
        <position position="63"/>
    </location>
    <ligand>
        <name>Ca(2+)</name>
        <dbReference type="ChEBI" id="CHEBI:29108"/>
        <label>2</label>
    </ligand>
</feature>
<feature type="binding site" evidence="2 3 4 6 7 8 10 11 14 17 18 19 20 21 22 23 24 25 26">
    <location>
        <position position="65"/>
    </location>
    <ligand>
        <name>Ca(2+)</name>
        <dbReference type="ChEBI" id="CHEBI:29108"/>
        <label>2</label>
    </ligand>
</feature>
<feature type="binding site" evidence="2 3 4 6 7 8 10 11 14 17 18 19 20 21 22 23 24 25 26">
    <location>
        <position position="67"/>
    </location>
    <ligand>
        <name>Ca(2+)</name>
        <dbReference type="ChEBI" id="CHEBI:29108"/>
        <label>2</label>
    </ligand>
</feature>
<feature type="binding site" evidence="2 3 4 6 7 8 10 11 14 17 18 19 20 21 22 23 24 25 26">
    <location>
        <position position="69"/>
    </location>
    <ligand>
        <name>Ca(2+)</name>
        <dbReference type="ChEBI" id="CHEBI:29108"/>
        <label>2</label>
    </ligand>
</feature>
<feature type="binding site" evidence="2 3 4 6 7 8 10 11 14 17 18 19 20 21 22 23 24 25 26">
    <location>
        <position position="74"/>
    </location>
    <ligand>
        <name>Ca(2+)</name>
        <dbReference type="ChEBI" id="CHEBI:29108"/>
        <label>2</label>
    </ligand>
</feature>
<feature type="binding site" evidence="2 3 4 6 7 8 10 11 12 14 16 17 18 19 20 21 22 23 24 25 26">
    <location>
        <position position="100"/>
    </location>
    <ligand>
        <name>Ca(2+)</name>
        <dbReference type="ChEBI" id="CHEBI:29108"/>
        <label>3</label>
    </ligand>
</feature>
<feature type="binding site" evidence="2 3 4 6 7 8 10 11 12 14 16 17 18 19 20 21 22 23 24 25 26">
    <location>
        <position position="102"/>
    </location>
    <ligand>
        <name>Ca(2+)</name>
        <dbReference type="ChEBI" id="CHEBI:29108"/>
        <label>3</label>
    </ligand>
</feature>
<feature type="binding site" evidence="2 3 4 6 7 8 10 11 12 14 16 17 18 19 20 21 22 23 24 25 26">
    <location>
        <position position="104"/>
    </location>
    <ligand>
        <name>Ca(2+)</name>
        <dbReference type="ChEBI" id="CHEBI:29108"/>
        <label>3</label>
    </ligand>
</feature>
<feature type="binding site" evidence="2 3 4 6 7 8 10 11 12 14 16 17 18 19 20 21 22 23 24 25 26">
    <location>
        <position position="106"/>
    </location>
    <ligand>
        <name>Ca(2+)</name>
        <dbReference type="ChEBI" id="CHEBI:29108"/>
        <label>3</label>
    </ligand>
</feature>
<feature type="binding site" evidence="2 3 4 6 7 8 10 11 12 14 16 17 18 19 20 21 22 23 24 25 26">
    <location>
        <position position="111"/>
    </location>
    <ligand>
        <name>Ca(2+)</name>
        <dbReference type="ChEBI" id="CHEBI:29108"/>
        <label>3</label>
    </ligand>
</feature>
<feature type="binding site" evidence="2 3 4 6 7 8 10 11 14 17 18 19 20 21 22 23 24 25 26">
    <location>
        <position position="141"/>
    </location>
    <ligand>
        <name>Ca(2+)</name>
        <dbReference type="ChEBI" id="CHEBI:29108"/>
        <label>4</label>
    </ligand>
</feature>
<feature type="binding site" evidence="2 3 4 6 7 8 10 11 14 17 18 19 20 21 22 23 24 25 26">
    <location>
        <position position="143"/>
    </location>
    <ligand>
        <name>Ca(2+)</name>
        <dbReference type="ChEBI" id="CHEBI:29108"/>
        <label>4</label>
    </ligand>
</feature>
<feature type="binding site" evidence="2 3 4 6 7 8 10 11 14 17 18 19 20 21 22 23 24 25 26">
    <location>
        <position position="145"/>
    </location>
    <ligand>
        <name>Ca(2+)</name>
        <dbReference type="ChEBI" id="CHEBI:29108"/>
        <label>4</label>
    </ligand>
</feature>
<feature type="binding site" evidence="2 3 4 6 7 8 10 11 14 17 18 19 20 21 22 23 24 25 26">
    <location>
        <position position="147"/>
    </location>
    <ligand>
        <name>Ca(2+)</name>
        <dbReference type="ChEBI" id="CHEBI:29108"/>
        <label>4</label>
    </ligand>
</feature>
<feature type="binding site" evidence="2 3 4 6 7 8 10 11 14 17 18 19 20 21 22 23 24 25 26">
    <location>
        <position position="152"/>
    </location>
    <ligand>
        <name>Ca(2+)</name>
        <dbReference type="ChEBI" id="CHEBI:29108"/>
        <label>4</label>
    </ligand>
</feature>
<feature type="site" description="Interaction with PxVP motif in substrates of the catalytic subunit" evidence="8">
    <location>
        <position position="118"/>
    </location>
</feature>
<feature type="site" description="Interaction with PxVP motif in substrates of the catalytic subunit" evidence="8">
    <location>
        <position position="122"/>
    </location>
</feature>
<feature type="modified residue" description="Phosphotyrosine" evidence="1">
    <location>
        <position position="106"/>
    </location>
</feature>
<feature type="lipid moiety-binding region" description="N-myristoyl glycine" evidence="9">
    <location>
        <position position="2"/>
    </location>
</feature>
<feature type="helix" evidence="31">
    <location>
        <begin position="9"/>
        <end position="11"/>
    </location>
</feature>
<feature type="strand" evidence="31">
    <location>
        <begin position="12"/>
        <end position="14"/>
    </location>
</feature>
<feature type="helix" evidence="31">
    <location>
        <begin position="17"/>
        <end position="30"/>
    </location>
</feature>
<feature type="strand" evidence="31">
    <location>
        <begin position="35"/>
        <end position="38"/>
    </location>
</feature>
<feature type="helix" evidence="31">
    <location>
        <begin position="40"/>
        <end position="44"/>
    </location>
</feature>
<feature type="helix" evidence="31">
    <location>
        <begin position="47"/>
        <end position="49"/>
    </location>
</feature>
<feature type="helix" evidence="31">
    <location>
        <begin position="55"/>
        <end position="62"/>
    </location>
</feature>
<feature type="strand" evidence="31">
    <location>
        <begin position="67"/>
        <end position="71"/>
    </location>
</feature>
<feature type="helix" evidence="31">
    <location>
        <begin position="72"/>
        <end position="80"/>
    </location>
</feature>
<feature type="strand" evidence="30">
    <location>
        <begin position="81"/>
        <end position="85"/>
    </location>
</feature>
<feature type="helix" evidence="31">
    <location>
        <begin position="88"/>
        <end position="99"/>
    </location>
</feature>
<feature type="strand" evidence="31">
    <location>
        <begin position="104"/>
        <end position="107"/>
    </location>
</feature>
<feature type="helix" evidence="31">
    <location>
        <begin position="109"/>
        <end position="120"/>
    </location>
</feature>
<feature type="helix" evidence="31">
    <location>
        <begin position="121"/>
        <end position="123"/>
    </location>
</feature>
<feature type="helix" evidence="31">
    <location>
        <begin position="126"/>
        <end position="140"/>
    </location>
</feature>
<feature type="strand" evidence="31">
    <location>
        <begin position="144"/>
        <end position="149"/>
    </location>
</feature>
<feature type="helix" evidence="31">
    <location>
        <begin position="150"/>
        <end position="157"/>
    </location>
</feature>
<feature type="helix" evidence="31">
    <location>
        <begin position="158"/>
        <end position="160"/>
    </location>
</feature>
<feature type="helix" evidence="32">
    <location>
        <begin position="162"/>
        <end position="165"/>
    </location>
</feature>
<comment type="function">
    <text evidence="10">Regulatory subunit of calcineurin, a calcium-dependent, calmodulin stimulated protein phosphatase. Confers calcium sensitivity.</text>
</comment>
<comment type="subunit">
    <text evidence="1 3 4 5 6 7 8 10 11 13 14">Forms a complex composed of a calmodulin-dependent catalytic subunit (also known as calcineurin A) and a regulatory Ca(2+)-binding subunit (also known as calcineurin B) (PubMed:12218175, PubMed:12357034, PubMed:17498738, PubMed:22343722, PubMed:23468591, PubMed:26794871, PubMed:27974827, PubMed:8524402). There are three catalytic subunits, each encoded by a separate gene (PPP3CA, PPP3CB, and PPP3CC) and two regulatory subunits which are also encoded by separate genes (PPP3R1 and PPP3R2). Interacts with catalytic subunit PPP3CA/calcineurin A (PubMed:12218175, PubMed:12357034, PubMed:17498738, PubMed:22343722, PubMed:23468591, PubMed:27974827, PubMed:31375679, PubMed:8524402). Interacts with catalytic subunit PPP3CB/calcineurin A (PubMed:26794871). Interacts with CIB1 (via C-terminal region); the interaction increases upon cardiomyocyte hypertrophy (By similarity). Interacts with RCAN1 (PubMed:12809556). Interacts with SPATA33 (via PQIIIT motif) (PubMed:34446558).</text>
</comment>
<comment type="interaction">
    <interactant intactId="EBI-915984">
        <id>P63098</id>
    </interactant>
    <interactant intactId="EBI-476263">
        <id>Q99683</id>
        <label>MAP3K5</label>
    </interactant>
    <organismsDiffer>false</organismsDiffer>
    <experiments>2</experiments>
</comment>
<comment type="interaction">
    <interactant intactId="EBI-915984">
        <id>P63098</id>
    </interactant>
    <interactant intactId="EBI-352922">
        <id>Q08209</id>
        <label>PPP3CA</label>
    </interactant>
    <organismsDiffer>false</organismsDiffer>
    <experiments>11</experiments>
</comment>
<comment type="interaction">
    <interactant intactId="EBI-915984">
        <id>P63098</id>
    </interactant>
    <interactant intactId="EBI-15637215">
        <id>Q08209-1</id>
        <label>PPP3CA</label>
    </interactant>
    <organismsDiffer>false</organismsDiffer>
    <experiments>7</experiments>
</comment>
<comment type="interaction">
    <interactant intactId="EBI-915984">
        <id>P63098</id>
    </interactant>
    <interactant intactId="EBI-11959013">
        <id>Q08209-2</id>
        <label>PPP3CA</label>
    </interactant>
    <organismsDiffer>false</organismsDiffer>
    <experiments>13</experiments>
</comment>
<comment type="interaction">
    <interactant intactId="EBI-915984">
        <id>P63098</id>
    </interactant>
    <interactant intactId="EBI-2827192">
        <id>P48454</id>
        <label>PPP3CC</label>
    </interactant>
    <organismsDiffer>false</organismsDiffer>
    <experiments>6</experiments>
</comment>
<comment type="interaction">
    <interactant intactId="EBI-915984">
        <id>P63098</id>
    </interactant>
    <interactant intactId="EBI-1541887">
        <id>P53805</id>
        <label>RCAN1</label>
    </interactant>
    <organismsDiffer>false</organismsDiffer>
    <experiments>3</experiments>
</comment>
<comment type="subcellular location">
    <subcellularLocation>
        <location evidence="1">Cytoplasm</location>
        <location evidence="1">Cytosol</location>
    </subcellularLocation>
    <subcellularLocation>
        <location evidence="1">Cell membrane</location>
    </subcellularLocation>
    <subcellularLocation>
        <location evidence="1">Cell membrane</location>
        <location evidence="1">Sarcolemma</location>
    </subcellularLocation>
    <subcellularLocation>
        <location evidence="9">Cell membrane</location>
        <topology evidence="9">Lipid-anchor</topology>
    </subcellularLocation>
    <text evidence="1">Translocates from the cytosol to the sarcolemma in a CIB1-dependent manner during cardiomyocyte hypertrophy.</text>
</comment>
<comment type="miscellaneous">
    <text evidence="3 4 6 7 8 10 11 14">This protein has four functional calcium-binding sites (PubMed:12218175, PubMed:12357034, PubMed:17498738, PubMed:22343722, PubMed:23468591, PubMed:26794871, PubMed:27974827, PubMed:8524402). Although African swine fever virus infects pigs and not humans, human PPP3R1 and PPP3CA have been used for the crystallization. PPP3CA and PPP3R1 interact with African swine fever virus Mal-047/A238L (via PKIIIT and FLCVK motifs); the interaction does not block catalytic activity per se but inhibits PPP3CA function by blocking the access to the two substrate recognition (PubMed:23468591).</text>
</comment>
<comment type="similarity">
    <text evidence="15">Belongs to the calcineurin regulatory subunit family.</text>
</comment>
<accession>P63098</accession>
<accession>B2RC10</accession>
<accession>B5MDU4</accession>
<accession>P06705</accession>
<accession>P15117</accession>
<accession>Q08044</accession>
<accession>Q53SL0</accession>
<name>CANB1_HUMAN</name>
<evidence type="ECO:0000250" key="1">
    <source>
        <dbReference type="UniProtKB" id="Q63810"/>
    </source>
</evidence>
<evidence type="ECO:0000255" key="2">
    <source>
        <dbReference type="PROSITE-ProRule" id="PRU00448"/>
    </source>
</evidence>
<evidence type="ECO:0000269" key="3">
    <source>
    </source>
</evidence>
<evidence type="ECO:0000269" key="4">
    <source>
    </source>
</evidence>
<evidence type="ECO:0000269" key="5">
    <source>
    </source>
</evidence>
<evidence type="ECO:0000269" key="6">
    <source>
    </source>
</evidence>
<evidence type="ECO:0000269" key="7">
    <source>
    </source>
</evidence>
<evidence type="ECO:0000269" key="8">
    <source>
    </source>
</evidence>
<evidence type="ECO:0000269" key="9">
    <source>
    </source>
</evidence>
<evidence type="ECO:0000269" key="10">
    <source>
    </source>
</evidence>
<evidence type="ECO:0000269" key="11">
    <source>
    </source>
</evidence>
<evidence type="ECO:0000269" key="12">
    <source>
    </source>
</evidence>
<evidence type="ECO:0000269" key="13">
    <source>
    </source>
</evidence>
<evidence type="ECO:0000269" key="14">
    <source>
    </source>
</evidence>
<evidence type="ECO:0000305" key="15"/>
<evidence type="ECO:0000312" key="16">
    <source>
        <dbReference type="PDB" id="6NUC"/>
    </source>
</evidence>
<evidence type="ECO:0007744" key="17">
    <source>
        <dbReference type="PDB" id="1AUI"/>
    </source>
</evidence>
<evidence type="ECO:0007744" key="18">
    <source>
        <dbReference type="PDB" id="1M63"/>
    </source>
</evidence>
<evidence type="ECO:0007744" key="19">
    <source>
        <dbReference type="PDB" id="1MF8"/>
    </source>
</evidence>
<evidence type="ECO:0007744" key="20">
    <source>
        <dbReference type="PDB" id="2P6B"/>
    </source>
</evidence>
<evidence type="ECO:0007744" key="21">
    <source>
        <dbReference type="PDB" id="3LL8"/>
    </source>
</evidence>
<evidence type="ECO:0007744" key="22">
    <source>
        <dbReference type="PDB" id="4F0Z"/>
    </source>
</evidence>
<evidence type="ECO:0007744" key="23">
    <source>
        <dbReference type="PDB" id="4OR9"/>
    </source>
</evidence>
<evidence type="ECO:0007744" key="24">
    <source>
        <dbReference type="PDB" id="4ORA"/>
    </source>
</evidence>
<evidence type="ECO:0007744" key="25">
    <source>
        <dbReference type="PDB" id="4ORC"/>
    </source>
</evidence>
<evidence type="ECO:0007744" key="26">
    <source>
        <dbReference type="PDB" id="5SVE"/>
    </source>
</evidence>
<evidence type="ECO:0007744" key="27">
    <source>
        <dbReference type="PDB" id="6NUC"/>
    </source>
</evidence>
<evidence type="ECO:0007744" key="28">
    <source>
        <dbReference type="PDB" id="6NUF"/>
    </source>
</evidence>
<evidence type="ECO:0007744" key="29">
    <source>
        <dbReference type="PDB" id="6NUU"/>
    </source>
</evidence>
<evidence type="ECO:0007829" key="30">
    <source>
        <dbReference type="PDB" id="1M63"/>
    </source>
</evidence>
<evidence type="ECO:0007829" key="31">
    <source>
        <dbReference type="PDB" id="4F0Z"/>
    </source>
</evidence>
<evidence type="ECO:0007829" key="32">
    <source>
        <dbReference type="PDB" id="6NUC"/>
    </source>
</evidence>
<reference key="1">
    <citation type="journal article" date="1989" name="DNA">
        <title>Isolation and sequence of a cDNA clone for human calcineurin B, the Ca2+-binding subunit of the Ca2+/calmodulin-stimulated protein phosphatase.</title>
        <authorList>
            <person name="Guerini D."/>
            <person name="Krinks M.H."/>
            <person name="Sikela J.M."/>
            <person name="Hahn W.E."/>
            <person name="Klee C.B."/>
        </authorList>
    </citation>
    <scope>NUCLEOTIDE SEQUENCE [MRNA]</scope>
</reference>
<reference key="2">
    <citation type="submission" date="2004-06" db="EMBL/GenBank/DDBJ databases">
        <title>Cloning of human full open reading frames in Gateway(TM) system entry vector (pDONR201).</title>
        <authorList>
            <person name="Ebert L."/>
            <person name="Schick M."/>
            <person name="Neubert P."/>
            <person name="Schatten R."/>
            <person name="Henze S."/>
            <person name="Korn B."/>
        </authorList>
    </citation>
    <scope>NUCLEOTIDE SEQUENCE [LARGE SCALE MRNA]</scope>
</reference>
<reference key="3">
    <citation type="journal article" date="2004" name="Nat. Genet.">
        <title>Complete sequencing and characterization of 21,243 full-length human cDNAs.</title>
        <authorList>
            <person name="Ota T."/>
            <person name="Suzuki Y."/>
            <person name="Nishikawa T."/>
            <person name="Otsuki T."/>
            <person name="Sugiyama T."/>
            <person name="Irie R."/>
            <person name="Wakamatsu A."/>
            <person name="Hayashi K."/>
            <person name="Sato H."/>
            <person name="Nagai K."/>
            <person name="Kimura K."/>
            <person name="Makita H."/>
            <person name="Sekine M."/>
            <person name="Obayashi M."/>
            <person name="Nishi T."/>
            <person name="Shibahara T."/>
            <person name="Tanaka T."/>
            <person name="Ishii S."/>
            <person name="Yamamoto J."/>
            <person name="Saito K."/>
            <person name="Kawai Y."/>
            <person name="Isono Y."/>
            <person name="Nakamura Y."/>
            <person name="Nagahari K."/>
            <person name="Murakami K."/>
            <person name="Yasuda T."/>
            <person name="Iwayanagi T."/>
            <person name="Wagatsuma M."/>
            <person name="Shiratori A."/>
            <person name="Sudo H."/>
            <person name="Hosoiri T."/>
            <person name="Kaku Y."/>
            <person name="Kodaira H."/>
            <person name="Kondo H."/>
            <person name="Sugawara M."/>
            <person name="Takahashi M."/>
            <person name="Kanda K."/>
            <person name="Yokoi T."/>
            <person name="Furuya T."/>
            <person name="Kikkawa E."/>
            <person name="Omura Y."/>
            <person name="Abe K."/>
            <person name="Kamihara K."/>
            <person name="Katsuta N."/>
            <person name="Sato K."/>
            <person name="Tanikawa M."/>
            <person name="Yamazaki M."/>
            <person name="Ninomiya K."/>
            <person name="Ishibashi T."/>
            <person name="Yamashita H."/>
            <person name="Murakawa K."/>
            <person name="Fujimori K."/>
            <person name="Tanai H."/>
            <person name="Kimata M."/>
            <person name="Watanabe M."/>
            <person name="Hiraoka S."/>
            <person name="Chiba Y."/>
            <person name="Ishida S."/>
            <person name="Ono Y."/>
            <person name="Takiguchi S."/>
            <person name="Watanabe S."/>
            <person name="Yosida M."/>
            <person name="Hotuta T."/>
            <person name="Kusano J."/>
            <person name="Kanehori K."/>
            <person name="Takahashi-Fujii A."/>
            <person name="Hara H."/>
            <person name="Tanase T.-O."/>
            <person name="Nomura Y."/>
            <person name="Togiya S."/>
            <person name="Komai F."/>
            <person name="Hara R."/>
            <person name="Takeuchi K."/>
            <person name="Arita M."/>
            <person name="Imose N."/>
            <person name="Musashino K."/>
            <person name="Yuuki H."/>
            <person name="Oshima A."/>
            <person name="Sasaki N."/>
            <person name="Aotsuka S."/>
            <person name="Yoshikawa Y."/>
            <person name="Matsunawa H."/>
            <person name="Ichihara T."/>
            <person name="Shiohata N."/>
            <person name="Sano S."/>
            <person name="Moriya S."/>
            <person name="Momiyama H."/>
            <person name="Satoh N."/>
            <person name="Takami S."/>
            <person name="Terashima Y."/>
            <person name="Suzuki O."/>
            <person name="Nakagawa S."/>
            <person name="Senoh A."/>
            <person name="Mizoguchi H."/>
            <person name="Goto Y."/>
            <person name="Shimizu F."/>
            <person name="Wakebe H."/>
            <person name="Hishigaki H."/>
            <person name="Watanabe T."/>
            <person name="Sugiyama A."/>
            <person name="Takemoto M."/>
            <person name="Kawakami B."/>
            <person name="Yamazaki M."/>
            <person name="Watanabe K."/>
            <person name="Kumagai A."/>
            <person name="Itakura S."/>
            <person name="Fukuzumi Y."/>
            <person name="Fujimori Y."/>
            <person name="Komiyama M."/>
            <person name="Tashiro H."/>
            <person name="Tanigami A."/>
            <person name="Fujiwara T."/>
            <person name="Ono T."/>
            <person name="Yamada K."/>
            <person name="Fujii Y."/>
            <person name="Ozaki K."/>
            <person name="Hirao M."/>
            <person name="Ohmori Y."/>
            <person name="Kawabata A."/>
            <person name="Hikiji T."/>
            <person name="Kobatake N."/>
            <person name="Inagaki H."/>
            <person name="Ikema Y."/>
            <person name="Okamoto S."/>
            <person name="Okitani R."/>
            <person name="Kawakami T."/>
            <person name="Noguchi S."/>
            <person name="Itoh T."/>
            <person name="Shigeta K."/>
            <person name="Senba T."/>
            <person name="Matsumura K."/>
            <person name="Nakajima Y."/>
            <person name="Mizuno T."/>
            <person name="Morinaga M."/>
            <person name="Sasaki M."/>
            <person name="Togashi T."/>
            <person name="Oyama M."/>
            <person name="Hata H."/>
            <person name="Watanabe M."/>
            <person name="Komatsu T."/>
            <person name="Mizushima-Sugano J."/>
            <person name="Satoh T."/>
            <person name="Shirai Y."/>
            <person name="Takahashi Y."/>
            <person name="Nakagawa K."/>
            <person name="Okumura K."/>
            <person name="Nagase T."/>
            <person name="Nomura N."/>
            <person name="Kikuchi H."/>
            <person name="Masuho Y."/>
            <person name="Yamashita R."/>
            <person name="Nakai K."/>
            <person name="Yada T."/>
            <person name="Nakamura Y."/>
            <person name="Ohara O."/>
            <person name="Isogai T."/>
            <person name="Sugano S."/>
        </authorList>
    </citation>
    <scope>NUCLEOTIDE SEQUENCE [LARGE SCALE MRNA]</scope>
</reference>
<reference key="4">
    <citation type="journal article" date="2005" name="Nature">
        <title>Generation and annotation of the DNA sequences of human chromosomes 2 and 4.</title>
        <authorList>
            <person name="Hillier L.W."/>
            <person name="Graves T.A."/>
            <person name="Fulton R.S."/>
            <person name="Fulton L.A."/>
            <person name="Pepin K.H."/>
            <person name="Minx P."/>
            <person name="Wagner-McPherson C."/>
            <person name="Layman D."/>
            <person name="Wylie K."/>
            <person name="Sekhon M."/>
            <person name="Becker M.C."/>
            <person name="Fewell G.A."/>
            <person name="Delehaunty K.D."/>
            <person name="Miner T.L."/>
            <person name="Nash W.E."/>
            <person name="Kremitzki C."/>
            <person name="Oddy L."/>
            <person name="Du H."/>
            <person name="Sun H."/>
            <person name="Bradshaw-Cordum H."/>
            <person name="Ali J."/>
            <person name="Carter J."/>
            <person name="Cordes M."/>
            <person name="Harris A."/>
            <person name="Isak A."/>
            <person name="van Brunt A."/>
            <person name="Nguyen C."/>
            <person name="Du F."/>
            <person name="Courtney L."/>
            <person name="Kalicki J."/>
            <person name="Ozersky P."/>
            <person name="Abbott S."/>
            <person name="Armstrong J."/>
            <person name="Belter E.A."/>
            <person name="Caruso L."/>
            <person name="Cedroni M."/>
            <person name="Cotton M."/>
            <person name="Davidson T."/>
            <person name="Desai A."/>
            <person name="Elliott G."/>
            <person name="Erb T."/>
            <person name="Fronick C."/>
            <person name="Gaige T."/>
            <person name="Haakenson W."/>
            <person name="Haglund K."/>
            <person name="Holmes A."/>
            <person name="Harkins R."/>
            <person name="Kim K."/>
            <person name="Kruchowski S.S."/>
            <person name="Strong C.M."/>
            <person name="Grewal N."/>
            <person name="Goyea E."/>
            <person name="Hou S."/>
            <person name="Levy A."/>
            <person name="Martinka S."/>
            <person name="Mead K."/>
            <person name="McLellan M.D."/>
            <person name="Meyer R."/>
            <person name="Randall-Maher J."/>
            <person name="Tomlinson C."/>
            <person name="Dauphin-Kohlberg S."/>
            <person name="Kozlowicz-Reilly A."/>
            <person name="Shah N."/>
            <person name="Swearengen-Shahid S."/>
            <person name="Snider J."/>
            <person name="Strong J.T."/>
            <person name="Thompson J."/>
            <person name="Yoakum M."/>
            <person name="Leonard S."/>
            <person name="Pearman C."/>
            <person name="Trani L."/>
            <person name="Radionenko M."/>
            <person name="Waligorski J.E."/>
            <person name="Wang C."/>
            <person name="Rock S.M."/>
            <person name="Tin-Wollam A.-M."/>
            <person name="Maupin R."/>
            <person name="Latreille P."/>
            <person name="Wendl M.C."/>
            <person name="Yang S.-P."/>
            <person name="Pohl C."/>
            <person name="Wallis J.W."/>
            <person name="Spieth J."/>
            <person name="Bieri T.A."/>
            <person name="Berkowicz N."/>
            <person name="Nelson J.O."/>
            <person name="Osborne J."/>
            <person name="Ding L."/>
            <person name="Meyer R."/>
            <person name="Sabo A."/>
            <person name="Shotland Y."/>
            <person name="Sinha P."/>
            <person name="Wohldmann P.E."/>
            <person name="Cook L.L."/>
            <person name="Hickenbotham M.T."/>
            <person name="Eldred J."/>
            <person name="Williams D."/>
            <person name="Jones T.A."/>
            <person name="She X."/>
            <person name="Ciccarelli F.D."/>
            <person name="Izaurralde E."/>
            <person name="Taylor J."/>
            <person name="Schmutz J."/>
            <person name="Myers R.M."/>
            <person name="Cox D.R."/>
            <person name="Huang X."/>
            <person name="McPherson J.D."/>
            <person name="Mardis E.R."/>
            <person name="Clifton S.W."/>
            <person name="Warren W.C."/>
            <person name="Chinwalla A.T."/>
            <person name="Eddy S.R."/>
            <person name="Marra M.A."/>
            <person name="Ovcharenko I."/>
            <person name="Furey T.S."/>
            <person name="Miller W."/>
            <person name="Eichler E.E."/>
            <person name="Bork P."/>
            <person name="Suyama M."/>
            <person name="Torrents D."/>
            <person name="Waterston R.H."/>
            <person name="Wilson R.K."/>
        </authorList>
    </citation>
    <scope>NUCLEOTIDE SEQUENCE [LARGE SCALE GENOMIC DNA]</scope>
</reference>
<reference key="5">
    <citation type="submission" date="2005-09" db="EMBL/GenBank/DDBJ databases">
        <authorList>
            <person name="Mural R.J."/>
            <person name="Istrail S."/>
            <person name="Sutton G.G."/>
            <person name="Florea L."/>
            <person name="Halpern A.L."/>
            <person name="Mobarry C.M."/>
            <person name="Lippert R."/>
            <person name="Walenz B."/>
            <person name="Shatkay H."/>
            <person name="Dew I."/>
            <person name="Miller J.R."/>
            <person name="Flanigan M.J."/>
            <person name="Edwards N.J."/>
            <person name="Bolanos R."/>
            <person name="Fasulo D."/>
            <person name="Halldorsson B.V."/>
            <person name="Hannenhalli S."/>
            <person name="Turner R."/>
            <person name="Yooseph S."/>
            <person name="Lu F."/>
            <person name="Nusskern D.R."/>
            <person name="Shue B.C."/>
            <person name="Zheng X.H."/>
            <person name="Zhong F."/>
            <person name="Delcher A.L."/>
            <person name="Huson D.H."/>
            <person name="Kravitz S.A."/>
            <person name="Mouchard L."/>
            <person name="Reinert K."/>
            <person name="Remington K.A."/>
            <person name="Clark A.G."/>
            <person name="Waterman M.S."/>
            <person name="Eichler E.E."/>
            <person name="Adams M.D."/>
            <person name="Hunkapiller M.W."/>
            <person name="Myers E.W."/>
            <person name="Venter J.C."/>
        </authorList>
    </citation>
    <scope>NUCLEOTIDE SEQUENCE [LARGE SCALE GENOMIC DNA]</scope>
</reference>
<reference key="6">
    <citation type="journal article" date="2004" name="Genome Res.">
        <title>The status, quality, and expansion of the NIH full-length cDNA project: the Mammalian Gene Collection (MGC).</title>
        <authorList>
            <consortium name="The MGC Project Team"/>
        </authorList>
    </citation>
    <scope>NUCLEOTIDE SEQUENCE [LARGE SCALE MRNA]</scope>
    <source>
        <tissue>Blood</tissue>
    </source>
</reference>
<reference key="7">
    <citation type="submission" date="2008-12" db="UniProtKB">
        <authorList>
            <person name="Lubec G."/>
            <person name="Chen W.-Q."/>
            <person name="Sun Y."/>
        </authorList>
    </citation>
    <scope>PROTEIN SEQUENCE OF 58-85; 98-117; 126-135 AND 148-164</scope>
    <scope>IDENTIFICATION BY MASS SPECTROMETRY</scope>
    <source>
        <tissue>Fetal brain cortex</tissue>
    </source>
</reference>
<reference key="8">
    <citation type="journal article" date="2003" name="Biochem. J.">
        <title>Phosphorylation of calcipressin 1 increases its ability to inhibit calcineurin and decreases calcipressin half-life.</title>
        <authorList>
            <person name="Genesca L."/>
            <person name="Aubareda A."/>
            <person name="Fuentes J.J."/>
            <person name="Estivill X."/>
            <person name="De La Luna S."/>
            <person name="Perez-Riba M."/>
        </authorList>
    </citation>
    <scope>INTERACTION WITH RCAN1</scope>
</reference>
<reference key="9">
    <citation type="journal article" date="2014" name="Nat. Commun.">
        <title>Global profiling of co- and post-translationally N-myristoylated proteomes in human cells.</title>
        <authorList>
            <person name="Thinon E."/>
            <person name="Serwa R.A."/>
            <person name="Broncel M."/>
            <person name="Brannigan J.A."/>
            <person name="Brassat U."/>
            <person name="Wright M.H."/>
            <person name="Heal W.P."/>
            <person name="Wilkinson A.J."/>
            <person name="Mann D.J."/>
            <person name="Tate E.W."/>
        </authorList>
    </citation>
    <scope>SUBCELLULAR LOCATION</scope>
    <scope>MYRISTOYLATION AT GLY-2</scope>
    <scope>CLEAVAGE OF INITIATOR METHIONINE</scope>
    <scope>IDENTIFICATION BY MASS SPECTROMETRY</scope>
</reference>
<reference key="10">
    <citation type="journal article" date="2021" name="Proc. Natl. Acad. Sci. U.S.A.">
        <title>SPATA33 localizes calcineurin to the mitochondria and regulates sperm motility in mice.</title>
        <authorList>
            <person name="Miyata H."/>
            <person name="Oura S."/>
            <person name="Morohoshi A."/>
            <person name="Shimada K."/>
            <person name="Mashiko D."/>
            <person name="Oyama Y."/>
            <person name="Kaneda Y."/>
            <person name="Matsumura T."/>
            <person name="Abbasi F."/>
            <person name="Ikawa M."/>
        </authorList>
    </citation>
    <scope>INTERACTION WITH SPATA33</scope>
</reference>
<reference key="11">
    <citation type="journal article" date="1995" name="Nature">
        <title>Crystal structures of human calcineurin and the human FKBP12-FK506-calcineurin complex.</title>
        <authorList>
            <person name="Kissinger C.R."/>
            <person name="Parge H.E."/>
            <person name="Knighton D.R."/>
            <person name="Lewis C.T."/>
            <person name="Pelletier L.A."/>
            <person name="Tempczyk A."/>
            <person name="Kalish V.J."/>
            <person name="Tucker K.D."/>
            <person name="Showalter R.E."/>
            <person name="Moomaw E.W."/>
            <person name="Gastinel L.N."/>
            <person name="Habuka N."/>
            <person name="Chen X."/>
            <person name="Maldonado F."/>
            <person name="Barker J.E."/>
            <person name="Bacquet R."/>
            <person name="Villafranca J.E."/>
        </authorList>
    </citation>
    <scope>X-RAY CRYSTALLOGRAPHY (2.10 ANGSTROMS) OF 2-170 IN COMPLEX WITH PPP3CA AND CALCIUM</scope>
</reference>
<reference key="12">
    <citation type="journal article" date="2002" name="Proc. Natl. Acad. Sci. U.S.A.">
        <title>Crystal structure of calcineurin-cyclophilin-cyclosporin shows common but distinct recognition of immunophilin-drug complexes.</title>
        <authorList>
            <person name="Huai Q."/>
            <person name="Kim H.Y."/>
            <person name="Liu Y."/>
            <person name="Zhao Y."/>
            <person name="Mondragon A."/>
            <person name="Liu J.O."/>
            <person name="Ke H."/>
        </authorList>
    </citation>
    <scope>X-RAY CRYSTALLOGRAPHY (2.8 ANGSTROMS) OF 2-170 IN COMPLEX WITH PPIA; PPP3CA AND CALCIUM</scope>
</reference>
<reference key="13">
    <citation type="journal article" date="2002" name="Proc. Natl. Acad. Sci. U.S.A.">
        <title>Crystal structure of human calcineurin complexed with cyclosporin A and human cyclophilin.</title>
        <authorList>
            <person name="Jin L."/>
            <person name="Harrison S.C."/>
        </authorList>
    </citation>
    <scope>X-RAY CRYSTALLOGRAPHY (3.1 ANGSTROMS) OF 1-170 IN COMPLEX WITH PPIA; PPP3CA AND CALCIUM</scope>
</reference>
<reference key="14">
    <citation type="journal article" date="2007" name="J. Mol. Biol.">
        <title>Structure of calcineurin in complex with PVIVIT peptide: portrait of a low-affinity signalling interaction.</title>
        <authorList>
            <person name="Li H."/>
            <person name="Zhang L."/>
            <person name="Rao A."/>
            <person name="Harrison S.C."/>
            <person name="Hogan P.G."/>
        </authorList>
    </citation>
    <scope>X-RAY CRYSTALLOGRAPHY (2.30 ANGSTROMS) OF 15-170 IN COMPLEX WITH PPP3CA AND CALCIUM</scope>
</reference>
<reference key="15">
    <citation type="journal article" date="2012" name="Nat. Struct. Mol. Biol.">
        <title>Balanced interactions of calcineurin with AKAP79 regulate Ca2+-calcineurin-NFAT signaling.</title>
        <authorList>
            <person name="Li H."/>
            <person name="Pink M.D."/>
            <person name="Murphy J.G."/>
            <person name="Stein A."/>
            <person name="Dell'Acqua M.L."/>
            <person name="Hogan P.G."/>
        </authorList>
    </citation>
    <scope>X-RAY CRYSTALLOGRAPHY (2.00 ANGSTROMS) OF 16-170 IN COMPLEX WITH PPP3CA AND CALCIUM</scope>
</reference>
<reference key="16">
    <citation type="journal article" date="2013" name="PLoS Biol.">
        <title>The molecular mechanism of substrate engagement and immunosuppressant inhibition of calcineurin.</title>
        <authorList>
            <person name="Grigoriu S."/>
            <person name="Bond R."/>
            <person name="Cossio P."/>
            <person name="Chen J.A."/>
            <person name="Ly N."/>
            <person name="Hummer G."/>
            <person name="Page R."/>
            <person name="Cyert M.S."/>
            <person name="Peti W."/>
        </authorList>
    </citation>
    <scope>X-RAY CRYSTALLOGRAPHY (1.70 ANGSTROMS) IN COMPLEX WITH PPP3CA; AFRICAN SWINE FEVER VIRUS MAL-047/A238L AND CALCIUM</scope>
</reference>
<reference key="17">
    <citation type="journal article" date="2016" name="Cell Res.">
        <title>Cooperative autoinhibition and multi-level activation mechanisms of calcineurin.</title>
        <authorList>
            <person name="Li S.J."/>
            <person name="Wang J."/>
            <person name="Ma L."/>
            <person name="Lu C."/>
            <person name="Wang J."/>
            <person name="Wu J.W."/>
            <person name="Wang Z.X."/>
        </authorList>
    </citation>
    <scope>X-RAY CRYSTALLOGRAPHY (2.23 ANGSTROMS) IN COMPLEX WITH PPP3CB AND CALCIUM</scope>
    <scope>FUNCTION</scope>
</reference>
<reference key="18">
    <citation type="journal article" date="2016" name="Sci. Rep.">
        <title>Investigating the human Calcineurin Interaction Network using the piLxVP SLiM.</title>
        <authorList>
            <person name="Sheftic S.R."/>
            <person name="Page R."/>
            <person name="Peti W."/>
        </authorList>
    </citation>
    <scope>X-RAY CRYSTALLOGRAPHY (2.60 ANGSTROMS) IN COMPLEX WITH PPP3CA AND CALCIUM</scope>
</reference>
<reference evidence="27 28 29" key="19">
    <citation type="journal article" date="2019" name="Nat. Commun.">
        <title>Molecular basis for the binding and selective dephosphorylation of Na+/H+ exchanger 1 by calcineurin.</title>
        <authorList>
            <person name="Hendus-Altenburger R."/>
            <person name="Wang X."/>
            <person name="Sjogaard-Frich L.M."/>
            <person name="Pedraz-Cuesta E."/>
            <person name="Sheftic S.R."/>
            <person name="Bendsoe A.H."/>
            <person name="Page R."/>
            <person name="Kragelund B.B."/>
            <person name="Pedersen S.F."/>
            <person name="Peti W."/>
        </authorList>
    </citation>
    <scope>X-RAY CRYSTALLOGRAPHY (1.90 ANGSTROMS) OF 15-170 IN COMPLEX WITH PPP3CA; SLC9A1 AND CALCIUM</scope>
</reference>
<protein>
    <recommendedName>
        <fullName>Calcineurin subunit B type 1</fullName>
    </recommendedName>
    <alternativeName>
        <fullName>Protein phosphatase 2B regulatory subunit 1</fullName>
    </alternativeName>
    <alternativeName>
        <fullName>Protein phosphatase 3 regulatory subunit B alpha isoform 1</fullName>
    </alternativeName>
</protein>
<dbReference type="EMBL" id="M30773">
    <property type="protein sequence ID" value="AAB08721.1"/>
    <property type="molecule type" value="mRNA"/>
</dbReference>
<dbReference type="EMBL" id="CR456938">
    <property type="protein sequence ID" value="CAG33219.1"/>
    <property type="molecule type" value="mRNA"/>
</dbReference>
<dbReference type="EMBL" id="AK314893">
    <property type="protein sequence ID" value="BAG37407.1"/>
    <property type="molecule type" value="mRNA"/>
</dbReference>
<dbReference type="EMBL" id="AC017083">
    <property type="protein sequence ID" value="AAY14715.1"/>
    <property type="molecule type" value="Genomic_DNA"/>
</dbReference>
<dbReference type="EMBL" id="CH471053">
    <property type="protein sequence ID" value="EAW99878.1"/>
    <property type="molecule type" value="Genomic_DNA"/>
</dbReference>
<dbReference type="EMBL" id="BC027913">
    <property type="protein sequence ID" value="AAH27913.1"/>
    <property type="molecule type" value="mRNA"/>
</dbReference>
<dbReference type="CCDS" id="CCDS46310.1"/>
<dbReference type="PIR" id="A33391">
    <property type="entry name" value="A33391"/>
</dbReference>
<dbReference type="RefSeq" id="NP_000936.1">
    <property type="nucleotide sequence ID" value="NM_000945.4"/>
</dbReference>
<dbReference type="PDB" id="1AUI">
    <property type="method" value="X-ray"/>
    <property type="resolution" value="2.10 A"/>
    <property type="chains" value="B=2-170"/>
</dbReference>
<dbReference type="PDB" id="1M63">
    <property type="method" value="X-ray"/>
    <property type="resolution" value="2.80 A"/>
    <property type="chains" value="B/F=2-170"/>
</dbReference>
<dbReference type="PDB" id="1MF8">
    <property type="method" value="X-ray"/>
    <property type="resolution" value="3.10 A"/>
    <property type="chains" value="B=1-170"/>
</dbReference>
<dbReference type="PDB" id="2P6B">
    <property type="method" value="X-ray"/>
    <property type="resolution" value="2.30 A"/>
    <property type="chains" value="B/D=16-170"/>
</dbReference>
<dbReference type="PDB" id="3LL8">
    <property type="method" value="X-ray"/>
    <property type="resolution" value="2.00 A"/>
    <property type="chains" value="B/D=16-170"/>
</dbReference>
<dbReference type="PDB" id="4F0Z">
    <property type="method" value="X-ray"/>
    <property type="resolution" value="1.70 A"/>
    <property type="chains" value="B=1-170"/>
</dbReference>
<dbReference type="PDB" id="4OR9">
    <property type="method" value="X-ray"/>
    <property type="resolution" value="2.23 A"/>
    <property type="chains" value="B=1-170"/>
</dbReference>
<dbReference type="PDB" id="4ORA">
    <property type="method" value="X-ray"/>
    <property type="resolution" value="2.75 A"/>
    <property type="chains" value="B=1-170"/>
</dbReference>
<dbReference type="PDB" id="4ORC">
    <property type="method" value="X-ray"/>
    <property type="resolution" value="2.70 A"/>
    <property type="chains" value="B=1-170"/>
</dbReference>
<dbReference type="PDB" id="5SVE">
    <property type="method" value="X-ray"/>
    <property type="resolution" value="2.60 A"/>
    <property type="chains" value="B=1-170"/>
</dbReference>
<dbReference type="PDB" id="6NUC">
    <property type="method" value="X-ray"/>
    <property type="resolution" value="1.90 A"/>
    <property type="chains" value="B=16-170"/>
</dbReference>
<dbReference type="PDB" id="6NUF">
    <property type="method" value="X-ray"/>
    <property type="resolution" value="1.90 A"/>
    <property type="chains" value="B=16-170"/>
</dbReference>
<dbReference type="PDB" id="6NUU">
    <property type="method" value="X-ray"/>
    <property type="resolution" value="2.30 A"/>
    <property type="chains" value="B=16-170"/>
</dbReference>
<dbReference type="PDB" id="7U0T">
    <property type="method" value="X-ray"/>
    <property type="resolution" value="2.45 A"/>
    <property type="chains" value="A=3-170"/>
</dbReference>
<dbReference type="PDB" id="9B9G">
    <property type="method" value="EM"/>
    <property type="resolution" value="3.50 A"/>
    <property type="chains" value="H/J=1-170"/>
</dbReference>
<dbReference type="PDB" id="9CHU">
    <property type="method" value="EM"/>
    <property type="resolution" value="3.49 A"/>
    <property type="chains" value="A=16-170"/>
</dbReference>
<dbReference type="PDB" id="9CHV">
    <property type="method" value="EM"/>
    <property type="resolution" value="3.95 A"/>
    <property type="chains" value="A=16-170"/>
</dbReference>
<dbReference type="PDB" id="9CHX">
    <property type="method" value="EM"/>
    <property type="resolution" value="3.50 A"/>
    <property type="chains" value="A=16-170"/>
</dbReference>
<dbReference type="PDBsum" id="1AUI"/>
<dbReference type="PDBsum" id="1M63"/>
<dbReference type="PDBsum" id="1MF8"/>
<dbReference type="PDBsum" id="2P6B"/>
<dbReference type="PDBsum" id="3LL8"/>
<dbReference type="PDBsum" id="4F0Z"/>
<dbReference type="PDBsum" id="4OR9"/>
<dbReference type="PDBsum" id="4ORA"/>
<dbReference type="PDBsum" id="4ORC"/>
<dbReference type="PDBsum" id="5SVE"/>
<dbReference type="PDBsum" id="6NUC"/>
<dbReference type="PDBsum" id="6NUF"/>
<dbReference type="PDBsum" id="6NUU"/>
<dbReference type="PDBsum" id="7U0T"/>
<dbReference type="PDBsum" id="9B9G"/>
<dbReference type="PDBsum" id="9CHU"/>
<dbReference type="PDBsum" id="9CHV"/>
<dbReference type="PDBsum" id="9CHX"/>
<dbReference type="EMDB" id="EMD-44382"/>
<dbReference type="SMR" id="P63098"/>
<dbReference type="BioGRID" id="111526">
    <property type="interactions" value="72"/>
</dbReference>
<dbReference type="ComplexPortal" id="CPX-1001">
    <property type="entry name" value="Calcineurin-Calmodulin complex, gamma-R1 variant"/>
</dbReference>
<dbReference type="ComplexPortal" id="CPX-1003">
    <property type="entry name" value="Calcineurin-Calmodulin complex, alpha-R1 variant"/>
</dbReference>
<dbReference type="ComplexPortal" id="CPX-1009">
    <property type="entry name" value="Calcineurin-Calmodulin complex, beta-R1 variant"/>
</dbReference>
<dbReference type="ComplexPortal" id="CPX-1112">
    <property type="entry name" value="Calcineurin-Calmodulin-AKAP5 complex, gamma-R1 variant"/>
</dbReference>
<dbReference type="ComplexPortal" id="CPX-674">
    <property type="entry name" value="Calcineurin-Calmodulin-AKAP5 complex, alpha-R1 variant"/>
</dbReference>
<dbReference type="ComplexPortal" id="CPX-998">
    <property type="entry name" value="Calcineurin-Calmodulin-AKAP5 complex, beta-R1 variant"/>
</dbReference>
<dbReference type="CORUM" id="P63098"/>
<dbReference type="DIP" id="DIP-6096N"/>
<dbReference type="ELM" id="P63098"/>
<dbReference type="FunCoup" id="P63098">
    <property type="interactions" value="3544"/>
</dbReference>
<dbReference type="IntAct" id="P63098">
    <property type="interactions" value="57"/>
</dbReference>
<dbReference type="MINT" id="P63098"/>
<dbReference type="STRING" id="9606.ENSP00000234310"/>
<dbReference type="BindingDB" id="P63098"/>
<dbReference type="ChEMBL" id="CHEMBL2082"/>
<dbReference type="DrugBank" id="DB08231">
    <property type="generic name" value="Myristic acid"/>
</dbReference>
<dbReference type="DrugBank" id="DB11693">
    <property type="generic name" value="Voclosporin"/>
</dbReference>
<dbReference type="DrugCentral" id="P63098"/>
<dbReference type="iPTMnet" id="P63098"/>
<dbReference type="PhosphoSitePlus" id="P63098"/>
<dbReference type="SwissPalm" id="P63098"/>
<dbReference type="BioMuta" id="PPP3R1"/>
<dbReference type="DMDM" id="52000904"/>
<dbReference type="OGP" id="P63098"/>
<dbReference type="jPOST" id="P63098"/>
<dbReference type="MassIVE" id="P63098"/>
<dbReference type="PaxDb" id="9606-ENSP00000234310"/>
<dbReference type="PeptideAtlas" id="P63098"/>
<dbReference type="ProteomicsDB" id="57476"/>
<dbReference type="Pumba" id="P63098"/>
<dbReference type="TopDownProteomics" id="P63098"/>
<dbReference type="Antibodypedia" id="34930">
    <property type="antibodies" value="238 antibodies from 33 providers"/>
</dbReference>
<dbReference type="DNASU" id="5534"/>
<dbReference type="Ensembl" id="ENST00000234310.8">
    <property type="protein sequence ID" value="ENSP00000234310.3"/>
    <property type="gene ID" value="ENSG00000221823.11"/>
</dbReference>
<dbReference type="GeneID" id="5534"/>
<dbReference type="KEGG" id="hsa:5534"/>
<dbReference type="MANE-Select" id="ENST00000234310.8">
    <property type="protein sequence ID" value="ENSP00000234310.3"/>
    <property type="RefSeq nucleotide sequence ID" value="NM_000945.4"/>
    <property type="RefSeq protein sequence ID" value="NP_000936.1"/>
</dbReference>
<dbReference type="UCSC" id="uc002sei.2">
    <property type="organism name" value="human"/>
</dbReference>
<dbReference type="AGR" id="HGNC:9317"/>
<dbReference type="CTD" id="5534"/>
<dbReference type="DisGeNET" id="5534"/>
<dbReference type="GeneCards" id="PPP3R1"/>
<dbReference type="HGNC" id="HGNC:9317">
    <property type="gene designation" value="PPP3R1"/>
</dbReference>
<dbReference type="HPA" id="ENSG00000221823">
    <property type="expression patterns" value="Tissue enhanced (brain, retina)"/>
</dbReference>
<dbReference type="MIM" id="601302">
    <property type="type" value="gene"/>
</dbReference>
<dbReference type="neXtProt" id="NX_P63098"/>
<dbReference type="OpenTargets" id="ENSG00000221823"/>
<dbReference type="PharmGKB" id="PA33681"/>
<dbReference type="VEuPathDB" id="HostDB:ENSG00000221823"/>
<dbReference type="eggNOG" id="KOG0034">
    <property type="taxonomic scope" value="Eukaryota"/>
</dbReference>
<dbReference type="GeneTree" id="ENSGT00940000156530"/>
<dbReference type="InParanoid" id="P63098"/>
<dbReference type="OMA" id="DTNFDRD"/>
<dbReference type="OrthoDB" id="191686at2759"/>
<dbReference type="PAN-GO" id="P63098">
    <property type="GO annotations" value="5 GO annotations based on evolutionary models"/>
</dbReference>
<dbReference type="PhylomeDB" id="P63098"/>
<dbReference type="TreeFam" id="TF105558"/>
<dbReference type="PathwayCommons" id="P63098"/>
<dbReference type="Reactome" id="R-HSA-111447">
    <property type="pathway name" value="Activation of BAD and translocation to mitochondria"/>
</dbReference>
<dbReference type="Reactome" id="R-HSA-180024">
    <property type="pathway name" value="DARPP-32 events"/>
</dbReference>
<dbReference type="Reactome" id="R-HSA-2025928">
    <property type="pathway name" value="Calcineurin activates NFAT"/>
</dbReference>
<dbReference type="Reactome" id="R-HSA-2871809">
    <property type="pathway name" value="FCERI mediated Ca+2 mobilization"/>
</dbReference>
<dbReference type="Reactome" id="R-HSA-4086398">
    <property type="pathway name" value="Ca2+ pathway"/>
</dbReference>
<dbReference type="Reactome" id="R-HSA-5607763">
    <property type="pathway name" value="CLEC7A (Dectin-1) induces NFAT activation"/>
</dbReference>
<dbReference type="SignaLink" id="P63098"/>
<dbReference type="SIGNOR" id="P63098"/>
<dbReference type="BioGRID-ORCS" id="5534">
    <property type="hits" value="46 hits in 1150 CRISPR screens"/>
</dbReference>
<dbReference type="ChiTaRS" id="PPP3R1">
    <property type="organism name" value="human"/>
</dbReference>
<dbReference type="EvolutionaryTrace" id="P63098"/>
<dbReference type="GeneWiki" id="PPP3R1"/>
<dbReference type="GenomeRNAi" id="5534"/>
<dbReference type="Pharos" id="P63098">
    <property type="development level" value="Tbio"/>
</dbReference>
<dbReference type="PRO" id="PR:P63098"/>
<dbReference type="Proteomes" id="UP000005640">
    <property type="component" value="Chromosome 2"/>
</dbReference>
<dbReference type="RNAct" id="P63098">
    <property type="molecule type" value="protein"/>
</dbReference>
<dbReference type="Bgee" id="ENSG00000221823">
    <property type="expression patterns" value="Expressed in cortical plate and 187 other cell types or tissues"/>
</dbReference>
<dbReference type="ExpressionAtlas" id="P63098">
    <property type="expression patterns" value="baseline and differential"/>
</dbReference>
<dbReference type="GO" id="GO:0005955">
    <property type="term" value="C:calcineurin complex"/>
    <property type="evidence" value="ECO:0000314"/>
    <property type="project" value="UniProtKB"/>
</dbReference>
<dbReference type="GO" id="GO:0005829">
    <property type="term" value="C:cytosol"/>
    <property type="evidence" value="ECO:0000304"/>
    <property type="project" value="Reactome"/>
</dbReference>
<dbReference type="GO" id="GO:0098978">
    <property type="term" value="C:glutamatergic synapse"/>
    <property type="evidence" value="ECO:0007669"/>
    <property type="project" value="Ensembl"/>
</dbReference>
<dbReference type="GO" id="GO:0098686">
    <property type="term" value="C:hippocampal mossy fiber to CA3 synapse"/>
    <property type="evidence" value="ECO:0007669"/>
    <property type="project" value="Ensembl"/>
</dbReference>
<dbReference type="GO" id="GO:0005654">
    <property type="term" value="C:nucleoplasm"/>
    <property type="evidence" value="ECO:0000304"/>
    <property type="project" value="Reactome"/>
</dbReference>
<dbReference type="GO" id="GO:0098688">
    <property type="term" value="C:parallel fiber to Purkinje cell synapse"/>
    <property type="evidence" value="ECO:0007669"/>
    <property type="project" value="Ensembl"/>
</dbReference>
<dbReference type="GO" id="GO:0098794">
    <property type="term" value="C:postsynapse"/>
    <property type="evidence" value="ECO:0007669"/>
    <property type="project" value="GOC"/>
</dbReference>
<dbReference type="GO" id="GO:0008287">
    <property type="term" value="C:protein serine/threonine phosphatase complex"/>
    <property type="evidence" value="ECO:0000303"/>
    <property type="project" value="ComplexPortal"/>
</dbReference>
<dbReference type="GO" id="GO:0042383">
    <property type="term" value="C:sarcolemma"/>
    <property type="evidence" value="ECO:0007669"/>
    <property type="project" value="UniProtKB-SubCell"/>
</dbReference>
<dbReference type="GO" id="GO:0098685">
    <property type="term" value="C:Schaffer collateral - CA1 synapse"/>
    <property type="evidence" value="ECO:0007669"/>
    <property type="project" value="Ensembl"/>
</dbReference>
<dbReference type="GO" id="GO:0005509">
    <property type="term" value="F:calcium ion binding"/>
    <property type="evidence" value="ECO:0000303"/>
    <property type="project" value="UniProtKB"/>
</dbReference>
<dbReference type="GO" id="GO:0004723">
    <property type="term" value="F:calcium-dependent protein serine/threonine phosphatase activity"/>
    <property type="evidence" value="ECO:0000303"/>
    <property type="project" value="UniProtKB"/>
</dbReference>
<dbReference type="GO" id="GO:0008597">
    <property type="term" value="F:calcium-dependent protein serine/threonine phosphatase regulator activity"/>
    <property type="evidence" value="ECO:0000318"/>
    <property type="project" value="GO_Central"/>
</dbReference>
<dbReference type="GO" id="GO:0005516">
    <property type="term" value="F:calmodulin binding"/>
    <property type="evidence" value="ECO:0000303"/>
    <property type="project" value="UniProtKB"/>
</dbReference>
<dbReference type="GO" id="GO:0019902">
    <property type="term" value="F:phosphatase binding"/>
    <property type="evidence" value="ECO:0000353"/>
    <property type="project" value="UniProtKB"/>
</dbReference>
<dbReference type="GO" id="GO:0019904">
    <property type="term" value="F:protein domain specific binding"/>
    <property type="evidence" value="ECO:0000353"/>
    <property type="project" value="BHF-UCL"/>
</dbReference>
<dbReference type="GO" id="GO:0001569">
    <property type="term" value="P:branching involved in blood vessel morphogenesis"/>
    <property type="evidence" value="ECO:0007669"/>
    <property type="project" value="Ensembl"/>
</dbReference>
<dbReference type="GO" id="GO:0033173">
    <property type="term" value="P:calcineurin-NFAT signaling cascade"/>
    <property type="evidence" value="ECO:0000314"/>
    <property type="project" value="BHF-UCL"/>
</dbReference>
<dbReference type="GO" id="GO:0001837">
    <property type="term" value="P:epithelial to mesenchymal transition"/>
    <property type="evidence" value="ECO:0007669"/>
    <property type="project" value="Ensembl"/>
</dbReference>
<dbReference type="GO" id="GO:0007507">
    <property type="term" value="P:heart development"/>
    <property type="evidence" value="ECO:0007669"/>
    <property type="project" value="Ensembl"/>
</dbReference>
<dbReference type="GO" id="GO:0060487">
    <property type="term" value="P:lung epithelial cell differentiation"/>
    <property type="evidence" value="ECO:0007669"/>
    <property type="project" value="Ensembl"/>
</dbReference>
<dbReference type="GO" id="GO:0022011">
    <property type="term" value="P:myelination in peripheral nervous system"/>
    <property type="evidence" value="ECO:0007669"/>
    <property type="project" value="Ensembl"/>
</dbReference>
<dbReference type="GO" id="GO:1905949">
    <property type="term" value="P:negative regulation of calcium ion import across plasma membrane"/>
    <property type="evidence" value="ECO:0000303"/>
    <property type="project" value="ComplexPortal"/>
</dbReference>
<dbReference type="GO" id="GO:0070886">
    <property type="term" value="P:positive regulation of calcineurin-NFAT signaling cascade"/>
    <property type="evidence" value="ECO:0000303"/>
    <property type="project" value="ComplexPortal"/>
</dbReference>
<dbReference type="GO" id="GO:1905665">
    <property type="term" value="P:positive regulation of calcium ion import across plasma membrane"/>
    <property type="evidence" value="ECO:0000303"/>
    <property type="project" value="ComplexPortal"/>
</dbReference>
<dbReference type="GO" id="GO:0045944">
    <property type="term" value="P:positive regulation of transcription by RNA polymerase II"/>
    <property type="evidence" value="ECO:0000314"/>
    <property type="project" value="BHF-UCL"/>
</dbReference>
<dbReference type="GO" id="GO:0099170">
    <property type="term" value="P:postsynaptic modulation of chemical synaptic transmission"/>
    <property type="evidence" value="ECO:0007669"/>
    <property type="project" value="Ensembl"/>
</dbReference>
<dbReference type="GO" id="GO:0006606">
    <property type="term" value="P:protein import into nucleus"/>
    <property type="evidence" value="ECO:0007669"/>
    <property type="project" value="Ensembl"/>
</dbReference>
<dbReference type="GO" id="GO:0099149">
    <property type="term" value="P:regulation of postsynaptic neurotransmitter receptor internalization"/>
    <property type="evidence" value="ECO:0007669"/>
    <property type="project" value="Ensembl"/>
</dbReference>
<dbReference type="GO" id="GO:0098693">
    <property type="term" value="P:regulation of synaptic vesicle cycle"/>
    <property type="evidence" value="ECO:0007669"/>
    <property type="project" value="Ensembl"/>
</dbReference>
<dbReference type="CDD" id="cd00051">
    <property type="entry name" value="EFh"/>
    <property type="match status" value="1"/>
</dbReference>
<dbReference type="DisProt" id="DP00565"/>
<dbReference type="FunFam" id="1.10.238.10:FF:000047">
    <property type="entry name" value="Calcineurin subunit B type 1"/>
    <property type="match status" value="1"/>
</dbReference>
<dbReference type="Gene3D" id="1.10.238.10">
    <property type="entry name" value="EF-hand"/>
    <property type="match status" value="1"/>
</dbReference>
<dbReference type="IDEAL" id="IID00060"/>
<dbReference type="InterPro" id="IPR011992">
    <property type="entry name" value="EF-hand-dom_pair"/>
</dbReference>
<dbReference type="InterPro" id="IPR018247">
    <property type="entry name" value="EF_Hand_1_Ca_BS"/>
</dbReference>
<dbReference type="InterPro" id="IPR002048">
    <property type="entry name" value="EF_hand_dom"/>
</dbReference>
<dbReference type="PANTHER" id="PTHR45942">
    <property type="entry name" value="PROTEIN PHOSPATASE 3 REGULATORY SUBUNIT B ALPHA ISOFORM TYPE 1"/>
    <property type="match status" value="1"/>
</dbReference>
<dbReference type="Pfam" id="PF13499">
    <property type="entry name" value="EF-hand_7"/>
    <property type="match status" value="2"/>
</dbReference>
<dbReference type="PRINTS" id="PR01697">
    <property type="entry name" value="PARVALBUMIN"/>
</dbReference>
<dbReference type="SMART" id="SM00054">
    <property type="entry name" value="EFh"/>
    <property type="match status" value="4"/>
</dbReference>
<dbReference type="SUPFAM" id="SSF47473">
    <property type="entry name" value="EF-hand"/>
    <property type="match status" value="1"/>
</dbReference>
<dbReference type="PROSITE" id="PS00018">
    <property type="entry name" value="EF_HAND_1"/>
    <property type="match status" value="4"/>
</dbReference>
<dbReference type="PROSITE" id="PS50222">
    <property type="entry name" value="EF_HAND_2"/>
    <property type="match status" value="4"/>
</dbReference>
<organism>
    <name type="scientific">Homo sapiens</name>
    <name type="common">Human</name>
    <dbReference type="NCBI Taxonomy" id="9606"/>
    <lineage>
        <taxon>Eukaryota</taxon>
        <taxon>Metazoa</taxon>
        <taxon>Chordata</taxon>
        <taxon>Craniata</taxon>
        <taxon>Vertebrata</taxon>
        <taxon>Euteleostomi</taxon>
        <taxon>Mammalia</taxon>
        <taxon>Eutheria</taxon>
        <taxon>Euarchontoglires</taxon>
        <taxon>Primates</taxon>
        <taxon>Haplorrhini</taxon>
        <taxon>Catarrhini</taxon>
        <taxon>Hominidae</taxon>
        <taxon>Homo</taxon>
    </lineage>
</organism>
<keyword id="KW-0002">3D-structure</keyword>
<keyword id="KW-0106">Calcium</keyword>
<keyword id="KW-1003">Cell membrane</keyword>
<keyword id="KW-0963">Cytoplasm</keyword>
<keyword id="KW-0903">Direct protein sequencing</keyword>
<keyword id="KW-0449">Lipoprotein</keyword>
<keyword id="KW-0472">Membrane</keyword>
<keyword id="KW-0479">Metal-binding</keyword>
<keyword id="KW-0519">Myristate</keyword>
<keyword id="KW-0597">Phosphoprotein</keyword>
<keyword id="KW-1267">Proteomics identification</keyword>
<keyword id="KW-1185">Reference proteome</keyword>
<keyword id="KW-0677">Repeat</keyword>